<keyword id="KW-0488">Methylation</keyword>
<keyword id="KW-0687">Ribonucleoprotein</keyword>
<keyword id="KW-0689">Ribosomal protein</keyword>
<keyword id="KW-0694">RNA-binding</keyword>
<keyword id="KW-0699">rRNA-binding</keyword>
<keyword id="KW-0820">tRNA-binding</keyword>
<sequence length="124" mass="13781">MATINQLVRKPRVKKVVKSNVPALEACPQKRGVCTRVYTTTPKKPNSALRKVCRIRLTNGYEVTSYIGGEGHNLQEHSVVLIRGGRVKDLPGVRYHTVRGALDCAGVKDRKQGRSKYGVKRPKS</sequence>
<dbReference type="EMBL" id="AY236072">
    <property type="protein sequence ID" value="AAP70010.1"/>
    <property type="molecule type" value="Genomic_DNA"/>
</dbReference>
<dbReference type="SMR" id="Q5F1R7"/>
<dbReference type="GO" id="GO:0015935">
    <property type="term" value="C:small ribosomal subunit"/>
    <property type="evidence" value="ECO:0007669"/>
    <property type="project" value="InterPro"/>
</dbReference>
<dbReference type="GO" id="GO:0019843">
    <property type="term" value="F:rRNA binding"/>
    <property type="evidence" value="ECO:0007669"/>
    <property type="project" value="UniProtKB-UniRule"/>
</dbReference>
<dbReference type="GO" id="GO:0003735">
    <property type="term" value="F:structural constituent of ribosome"/>
    <property type="evidence" value="ECO:0007669"/>
    <property type="project" value="InterPro"/>
</dbReference>
<dbReference type="GO" id="GO:0000049">
    <property type="term" value="F:tRNA binding"/>
    <property type="evidence" value="ECO:0007669"/>
    <property type="project" value="UniProtKB-UniRule"/>
</dbReference>
<dbReference type="GO" id="GO:0006412">
    <property type="term" value="P:translation"/>
    <property type="evidence" value="ECO:0007669"/>
    <property type="project" value="UniProtKB-UniRule"/>
</dbReference>
<dbReference type="CDD" id="cd03368">
    <property type="entry name" value="Ribosomal_S12"/>
    <property type="match status" value="1"/>
</dbReference>
<dbReference type="FunFam" id="2.40.50.140:FF:000001">
    <property type="entry name" value="30S ribosomal protein S12"/>
    <property type="match status" value="1"/>
</dbReference>
<dbReference type="Gene3D" id="2.40.50.140">
    <property type="entry name" value="Nucleic acid-binding proteins"/>
    <property type="match status" value="1"/>
</dbReference>
<dbReference type="HAMAP" id="MF_00403_B">
    <property type="entry name" value="Ribosomal_uS12_B"/>
    <property type="match status" value="1"/>
</dbReference>
<dbReference type="InterPro" id="IPR012340">
    <property type="entry name" value="NA-bd_OB-fold"/>
</dbReference>
<dbReference type="InterPro" id="IPR006032">
    <property type="entry name" value="Ribosomal_uS12"/>
</dbReference>
<dbReference type="InterPro" id="IPR005679">
    <property type="entry name" value="Ribosomal_uS12_bac"/>
</dbReference>
<dbReference type="NCBIfam" id="TIGR00981">
    <property type="entry name" value="rpsL_bact"/>
    <property type="match status" value="1"/>
</dbReference>
<dbReference type="PANTHER" id="PTHR11652">
    <property type="entry name" value="30S RIBOSOMAL PROTEIN S12 FAMILY MEMBER"/>
    <property type="match status" value="1"/>
</dbReference>
<dbReference type="Pfam" id="PF00164">
    <property type="entry name" value="Ribosom_S12_S23"/>
    <property type="match status" value="1"/>
</dbReference>
<dbReference type="PIRSF" id="PIRSF002133">
    <property type="entry name" value="Ribosomal_S12/S23"/>
    <property type="match status" value="1"/>
</dbReference>
<dbReference type="PRINTS" id="PR01034">
    <property type="entry name" value="RIBOSOMALS12"/>
</dbReference>
<dbReference type="SUPFAM" id="SSF50249">
    <property type="entry name" value="Nucleic acid-binding proteins"/>
    <property type="match status" value="1"/>
</dbReference>
<dbReference type="PROSITE" id="PS00055">
    <property type="entry name" value="RIBOSOMAL_S12"/>
    <property type="match status" value="1"/>
</dbReference>
<reference key="1">
    <citation type="journal article" date="2005" name="Vet. Microbiol.">
        <title>Development of a genetic manipulation system for Haemophilus parasuis.</title>
        <authorList>
            <person name="Bigas A."/>
            <person name="Garrido M.E."/>
            <person name="Perez de Rozas A.M."/>
            <person name="Badiola I."/>
            <person name="Barbe J."/>
            <person name="Llagostera M."/>
        </authorList>
    </citation>
    <scope>NUCLEOTIDE SEQUENCE [GENOMIC DNA]</scope>
</reference>
<accession>Q5F1R7</accession>
<organism>
    <name type="scientific">Glaesserella parasuis</name>
    <name type="common">Haemophilus parasuis</name>
    <dbReference type="NCBI Taxonomy" id="738"/>
    <lineage>
        <taxon>Bacteria</taxon>
        <taxon>Pseudomonadati</taxon>
        <taxon>Pseudomonadota</taxon>
        <taxon>Gammaproteobacteria</taxon>
        <taxon>Pasteurellales</taxon>
        <taxon>Pasteurellaceae</taxon>
        <taxon>Glaesserella</taxon>
    </lineage>
</organism>
<gene>
    <name evidence="2" type="primary">rpsL</name>
    <name evidence="2" type="synonym">rps12</name>
</gene>
<evidence type="ECO:0000250" key="1"/>
<evidence type="ECO:0000255" key="2">
    <source>
        <dbReference type="HAMAP-Rule" id="MF_00403"/>
    </source>
</evidence>
<evidence type="ECO:0000305" key="3"/>
<protein>
    <recommendedName>
        <fullName evidence="2">Small ribosomal subunit protein uS12</fullName>
    </recommendedName>
    <alternativeName>
        <fullName evidence="3">30S ribosomal protein S12</fullName>
    </alternativeName>
</protein>
<comment type="function">
    <text evidence="2">With S4 and S5 plays an important role in translational accuracy.</text>
</comment>
<comment type="function">
    <text evidence="2">Interacts with and stabilizes bases of the 16S rRNA that are involved in tRNA selection in the A site and with the mRNA backbone. Located at the interface of the 30S and 50S subunits, it traverses the body of the 30S subunit contacting proteins on the other side and probably holding the rRNA structure together. The combined cluster of proteins S8, S12 and S17 appears to hold together the shoulder and platform of the 30S subunit.</text>
</comment>
<comment type="subunit">
    <text evidence="2">Part of the 30S ribosomal subunit. Contacts proteins S8 and S17. May interact with IF1 in the 30S initiation complex.</text>
</comment>
<comment type="similarity">
    <text evidence="2">Belongs to the universal ribosomal protein uS12 family.</text>
</comment>
<name>RS12_GLAPU</name>
<feature type="initiator methionine" description="Removed" evidence="1">
    <location>
        <position position="1"/>
    </location>
</feature>
<feature type="chain" id="PRO_0000146233" description="Small ribosomal subunit protein uS12">
    <location>
        <begin position="2"/>
        <end position="124"/>
    </location>
</feature>
<feature type="modified residue" description="3-methylthioaspartic acid" evidence="1">
    <location>
        <position position="89"/>
    </location>
</feature>
<proteinExistence type="inferred from homology"/>